<accession>Q7WFD3</accession>
<evidence type="ECO:0000255" key="1">
    <source>
        <dbReference type="HAMAP-Rule" id="MF_00440"/>
    </source>
</evidence>
<proteinExistence type="inferred from homology"/>
<keyword id="KW-0067">ATP-binding</keyword>
<keyword id="KW-0238">DNA-binding</keyword>
<keyword id="KW-0479">Metal-binding</keyword>
<keyword id="KW-0547">Nucleotide-binding</keyword>
<keyword id="KW-0678">Repressor</keyword>
<keyword id="KW-0804">Transcription</keyword>
<keyword id="KW-0805">Transcription regulation</keyword>
<keyword id="KW-0862">Zinc</keyword>
<keyword id="KW-0863">Zinc-finger</keyword>
<dbReference type="EMBL" id="BX640450">
    <property type="protein sequence ID" value="CAE34710.1"/>
    <property type="molecule type" value="Genomic_DNA"/>
</dbReference>
<dbReference type="RefSeq" id="WP_003814871.1">
    <property type="nucleotide sequence ID" value="NC_002927.3"/>
</dbReference>
<dbReference type="SMR" id="Q7WFD3"/>
<dbReference type="GeneID" id="93205674"/>
<dbReference type="KEGG" id="bbr:BB4347"/>
<dbReference type="eggNOG" id="COG1327">
    <property type="taxonomic scope" value="Bacteria"/>
</dbReference>
<dbReference type="HOGENOM" id="CLU_108412_0_1_4"/>
<dbReference type="Proteomes" id="UP000001027">
    <property type="component" value="Chromosome"/>
</dbReference>
<dbReference type="GO" id="GO:0005524">
    <property type="term" value="F:ATP binding"/>
    <property type="evidence" value="ECO:0007669"/>
    <property type="project" value="UniProtKB-KW"/>
</dbReference>
<dbReference type="GO" id="GO:0003677">
    <property type="term" value="F:DNA binding"/>
    <property type="evidence" value="ECO:0007669"/>
    <property type="project" value="UniProtKB-KW"/>
</dbReference>
<dbReference type="GO" id="GO:0008270">
    <property type="term" value="F:zinc ion binding"/>
    <property type="evidence" value="ECO:0007669"/>
    <property type="project" value="UniProtKB-UniRule"/>
</dbReference>
<dbReference type="GO" id="GO:0045892">
    <property type="term" value="P:negative regulation of DNA-templated transcription"/>
    <property type="evidence" value="ECO:0007669"/>
    <property type="project" value="UniProtKB-UniRule"/>
</dbReference>
<dbReference type="HAMAP" id="MF_00440">
    <property type="entry name" value="NrdR"/>
    <property type="match status" value="1"/>
</dbReference>
<dbReference type="InterPro" id="IPR005144">
    <property type="entry name" value="ATP-cone_dom"/>
</dbReference>
<dbReference type="InterPro" id="IPR055173">
    <property type="entry name" value="NrdR-like_N"/>
</dbReference>
<dbReference type="InterPro" id="IPR003796">
    <property type="entry name" value="RNR_NrdR-like"/>
</dbReference>
<dbReference type="NCBIfam" id="TIGR00244">
    <property type="entry name" value="transcriptional regulator NrdR"/>
    <property type="match status" value="1"/>
</dbReference>
<dbReference type="PANTHER" id="PTHR30455">
    <property type="entry name" value="TRANSCRIPTIONAL REPRESSOR NRDR"/>
    <property type="match status" value="1"/>
</dbReference>
<dbReference type="PANTHER" id="PTHR30455:SF2">
    <property type="entry name" value="TRANSCRIPTIONAL REPRESSOR NRDR"/>
    <property type="match status" value="1"/>
</dbReference>
<dbReference type="Pfam" id="PF03477">
    <property type="entry name" value="ATP-cone"/>
    <property type="match status" value="1"/>
</dbReference>
<dbReference type="Pfam" id="PF22811">
    <property type="entry name" value="Zn_ribbon_NrdR"/>
    <property type="match status" value="1"/>
</dbReference>
<dbReference type="PROSITE" id="PS51161">
    <property type="entry name" value="ATP_CONE"/>
    <property type="match status" value="1"/>
</dbReference>
<reference key="1">
    <citation type="journal article" date="2003" name="Nat. Genet.">
        <title>Comparative analysis of the genome sequences of Bordetella pertussis, Bordetella parapertussis and Bordetella bronchiseptica.</title>
        <authorList>
            <person name="Parkhill J."/>
            <person name="Sebaihia M."/>
            <person name="Preston A."/>
            <person name="Murphy L.D."/>
            <person name="Thomson N.R."/>
            <person name="Harris D.E."/>
            <person name="Holden M.T.G."/>
            <person name="Churcher C.M."/>
            <person name="Bentley S.D."/>
            <person name="Mungall K.L."/>
            <person name="Cerdeno-Tarraga A.-M."/>
            <person name="Temple L."/>
            <person name="James K.D."/>
            <person name="Harris B."/>
            <person name="Quail M.A."/>
            <person name="Achtman M."/>
            <person name="Atkin R."/>
            <person name="Baker S."/>
            <person name="Basham D."/>
            <person name="Bason N."/>
            <person name="Cherevach I."/>
            <person name="Chillingworth T."/>
            <person name="Collins M."/>
            <person name="Cronin A."/>
            <person name="Davis P."/>
            <person name="Doggett J."/>
            <person name="Feltwell T."/>
            <person name="Goble A."/>
            <person name="Hamlin N."/>
            <person name="Hauser H."/>
            <person name="Holroyd S."/>
            <person name="Jagels K."/>
            <person name="Leather S."/>
            <person name="Moule S."/>
            <person name="Norberczak H."/>
            <person name="O'Neil S."/>
            <person name="Ormond D."/>
            <person name="Price C."/>
            <person name="Rabbinowitsch E."/>
            <person name="Rutter S."/>
            <person name="Sanders M."/>
            <person name="Saunders D."/>
            <person name="Seeger K."/>
            <person name="Sharp S."/>
            <person name="Simmonds M."/>
            <person name="Skelton J."/>
            <person name="Squares R."/>
            <person name="Squares S."/>
            <person name="Stevens K."/>
            <person name="Unwin L."/>
            <person name="Whitehead S."/>
            <person name="Barrell B.G."/>
            <person name="Maskell D.J."/>
        </authorList>
    </citation>
    <scope>NUCLEOTIDE SEQUENCE [LARGE SCALE GENOMIC DNA]</scope>
    <source>
        <strain>ATCC BAA-588 / NCTC 13252 / RB50</strain>
    </source>
</reference>
<protein>
    <recommendedName>
        <fullName evidence="1">Transcriptional repressor NrdR</fullName>
    </recommendedName>
</protein>
<comment type="function">
    <text evidence="1">Negatively regulates transcription of bacterial ribonucleotide reductase nrd genes and operons by binding to NrdR-boxes.</text>
</comment>
<comment type="cofactor">
    <cofactor evidence="1">
        <name>Zn(2+)</name>
        <dbReference type="ChEBI" id="CHEBI:29105"/>
    </cofactor>
    <text evidence="1">Binds 1 zinc ion.</text>
</comment>
<comment type="similarity">
    <text evidence="1">Belongs to the NrdR family.</text>
</comment>
<organism>
    <name type="scientific">Bordetella bronchiseptica (strain ATCC BAA-588 / NCTC 13252 / RB50)</name>
    <name type="common">Alcaligenes bronchisepticus</name>
    <dbReference type="NCBI Taxonomy" id="257310"/>
    <lineage>
        <taxon>Bacteria</taxon>
        <taxon>Pseudomonadati</taxon>
        <taxon>Pseudomonadota</taxon>
        <taxon>Betaproteobacteria</taxon>
        <taxon>Burkholderiales</taxon>
        <taxon>Alcaligenaceae</taxon>
        <taxon>Bordetella</taxon>
    </lineage>
</organism>
<sequence>MRCPFCGNADTQVVDSRVSEEGDTIRRRRRCLSCDKRFTTYERVELAMPSVVKRDGSRTEYDAGKVRGSLSLALRKRPVSTDEVDSAVARIEETLLASGMREVPSEQIGELVMGELKRLDKVAYVRYASVYKSFEDIGEFVEAIREMQGPLLPGKKLRKD</sequence>
<feature type="chain" id="PRO_0000182271" description="Transcriptional repressor NrdR">
    <location>
        <begin position="1"/>
        <end position="160"/>
    </location>
</feature>
<feature type="domain" description="ATP-cone" evidence="1">
    <location>
        <begin position="49"/>
        <end position="139"/>
    </location>
</feature>
<feature type="zinc finger region" evidence="1">
    <location>
        <begin position="3"/>
        <end position="34"/>
    </location>
</feature>
<name>NRDR_BORBR</name>
<gene>
    <name evidence="1" type="primary">nrdR</name>
    <name type="ordered locus">BB4347</name>
</gene>